<protein>
    <recommendedName>
        <fullName evidence="1">Translation factor GUF1, mitochondrial</fullName>
        <ecNumber>3.6.5.-</ecNumber>
    </recommendedName>
    <alternativeName>
        <fullName evidence="1">Elongation factor 4 homolog</fullName>
        <shortName evidence="1">EF-4</shortName>
    </alternativeName>
    <alternativeName>
        <fullName evidence="1">GTPase GUF1</fullName>
    </alternativeName>
    <alternativeName>
        <fullName evidence="1">Ribosomal back-translocase</fullName>
    </alternativeName>
</protein>
<organism>
    <name type="scientific">Paracoccidioides lutzii (strain ATCC MYA-826 / Pb01)</name>
    <name type="common">Paracoccidioides brasiliensis</name>
    <dbReference type="NCBI Taxonomy" id="502779"/>
    <lineage>
        <taxon>Eukaryota</taxon>
        <taxon>Fungi</taxon>
        <taxon>Dikarya</taxon>
        <taxon>Ascomycota</taxon>
        <taxon>Pezizomycotina</taxon>
        <taxon>Eurotiomycetes</taxon>
        <taxon>Eurotiomycetidae</taxon>
        <taxon>Onygenales</taxon>
        <taxon>Ajellomycetaceae</taxon>
        <taxon>Paracoccidioides</taxon>
    </lineage>
</organism>
<keyword id="KW-0342">GTP-binding</keyword>
<keyword id="KW-0378">Hydrolase</keyword>
<keyword id="KW-0472">Membrane</keyword>
<keyword id="KW-0496">Mitochondrion</keyword>
<keyword id="KW-0999">Mitochondrion inner membrane</keyword>
<keyword id="KW-0547">Nucleotide-binding</keyword>
<keyword id="KW-0648">Protein biosynthesis</keyword>
<keyword id="KW-1185">Reference proteome</keyword>
<keyword id="KW-0809">Transit peptide</keyword>
<accession>C1GX39</accession>
<reference key="1">
    <citation type="journal article" date="2011" name="PLoS Genet.">
        <title>Comparative genomic analysis of human fungal pathogens causing paracoccidioidomycosis.</title>
        <authorList>
            <person name="Desjardins C.A."/>
            <person name="Champion M.D."/>
            <person name="Holder J.W."/>
            <person name="Muszewska A."/>
            <person name="Goldberg J."/>
            <person name="Bailao A.M."/>
            <person name="Brigido M.M."/>
            <person name="Ferreira M.E."/>
            <person name="Garcia A.M."/>
            <person name="Grynberg M."/>
            <person name="Gujja S."/>
            <person name="Heiman D.I."/>
            <person name="Henn M.R."/>
            <person name="Kodira C.D."/>
            <person name="Leon-Narvaez H."/>
            <person name="Longo L.V.G."/>
            <person name="Ma L.-J."/>
            <person name="Malavazi I."/>
            <person name="Matsuo A.L."/>
            <person name="Morais F.V."/>
            <person name="Pereira M."/>
            <person name="Rodriguez-Brito S."/>
            <person name="Sakthikumar S."/>
            <person name="Salem-Izacc S.M."/>
            <person name="Sykes S.M."/>
            <person name="Teixeira M.M."/>
            <person name="Vallejo M.C."/>
            <person name="Walter M.E."/>
            <person name="Yandava C."/>
            <person name="Young S."/>
            <person name="Zeng Q."/>
            <person name="Zucker J."/>
            <person name="Felipe M.S."/>
            <person name="Goldman G.H."/>
            <person name="Haas B.J."/>
            <person name="McEwen J.G."/>
            <person name="Nino-Vega G."/>
            <person name="Puccia R."/>
            <person name="San-Blas G."/>
            <person name="Soares C.M."/>
            <person name="Birren B.W."/>
            <person name="Cuomo C.A."/>
        </authorList>
    </citation>
    <scope>NUCLEOTIDE SEQUENCE [LARGE SCALE GENOMIC DNA]</scope>
    <source>
        <strain>ATCC MYA-826 / Pb01</strain>
    </source>
</reference>
<gene>
    <name evidence="1" type="primary">GUF1</name>
    <name type="ORF">PAAG_03413</name>
</gene>
<name>GUF1_PARBA</name>
<feature type="transit peptide" description="Mitochondrion" evidence="1">
    <location>
        <begin position="1"/>
        <end position="40"/>
    </location>
</feature>
<feature type="chain" id="PRO_0000402895" description="Translation factor GUF1, mitochondrial">
    <location>
        <begin position="41"/>
        <end position="658"/>
    </location>
</feature>
<feature type="domain" description="tr-type G">
    <location>
        <begin position="60"/>
        <end position="240"/>
    </location>
</feature>
<feature type="binding site" evidence="1">
    <location>
        <begin position="69"/>
        <end position="76"/>
    </location>
    <ligand>
        <name>GTP</name>
        <dbReference type="ChEBI" id="CHEBI:37565"/>
    </ligand>
</feature>
<feature type="binding site" evidence="1">
    <location>
        <begin position="133"/>
        <end position="137"/>
    </location>
    <ligand>
        <name>GTP</name>
        <dbReference type="ChEBI" id="CHEBI:37565"/>
    </ligand>
</feature>
<feature type="binding site" evidence="1">
    <location>
        <begin position="187"/>
        <end position="190"/>
    </location>
    <ligand>
        <name>GTP</name>
        <dbReference type="ChEBI" id="CHEBI:37565"/>
    </ligand>
</feature>
<proteinExistence type="inferred from homology"/>
<sequence>MRGCLQTVRWLTSAWQRPRSYSPLSRAAPCRFFNVSIPRNAQSRKPVSELERRIAAISIDRFRNFCIVAHVDHGKSTLSDRLLELTGTIQPGGNKQVLDKLDVERERGITVKAQTCTMLYNYRGEDYLLHLVDTPGHVDFRAEVSRSYASCGGALLLVDASQGVQAQTVANFYLAFAEGLKLVPVINKVDLPSADPDRALEQMANTFELDPKSAVLVSAKTGLNVEQLLPTVVEQIPAPVGDHTKPLRMLLVDSWYSTYKGVILLVRIFDGEVRAGDHVGSLATGLKYHVGEVGIMYPGQTAQSVLRAGQVGYIYFNPAMKRSQEAKVGDTYTKVGSEKLIEPLPGFEEPKSMVFVAAYPVDASDFPHLEDSINQLLLNDRSITLQKESSEALGAGFRLGFLGTLHCSVFEDRLRQEHGASIIITPPTVPFKVIWKDGKEEIITNPALFPEEDALRAKVVELQEPFVLATLTFPEEYLGRVIELCESNRGEQKSLEFFTATQVILKYELPLAQLVDDFFGKLKGSTKGYASLDYEESGWRRSSIAKLQLLVNKVPVDAVSRVVHSSQAQKLGRLWVSKFKEHVDRQMFEVVIQAAVGRNIVARETIKPFRKDVLQKLHAADVTRRRKLLEKQKEGRKKLKAVGNVVIEHKAFQAFLAK</sequence>
<dbReference type="EC" id="3.6.5.-"/>
<dbReference type="EMBL" id="KN293998">
    <property type="protein sequence ID" value="EEH41127.2"/>
    <property type="molecule type" value="Genomic_DNA"/>
</dbReference>
<dbReference type="RefSeq" id="XP_015701934.1">
    <property type="nucleotide sequence ID" value="XM_015844960.1"/>
</dbReference>
<dbReference type="SMR" id="C1GX39"/>
<dbReference type="STRING" id="502779.C1GX39"/>
<dbReference type="GeneID" id="9098247"/>
<dbReference type="KEGG" id="pbl:PAAG_03413"/>
<dbReference type="VEuPathDB" id="FungiDB:PAAG_03413"/>
<dbReference type="eggNOG" id="KOG0462">
    <property type="taxonomic scope" value="Eukaryota"/>
</dbReference>
<dbReference type="HOGENOM" id="CLU_009995_3_1_1"/>
<dbReference type="OMA" id="QVKCDEN"/>
<dbReference type="OrthoDB" id="1074at2759"/>
<dbReference type="Proteomes" id="UP000002059">
    <property type="component" value="Partially assembled WGS sequence"/>
</dbReference>
<dbReference type="GO" id="GO:0005743">
    <property type="term" value="C:mitochondrial inner membrane"/>
    <property type="evidence" value="ECO:0007669"/>
    <property type="project" value="UniProtKB-SubCell"/>
</dbReference>
<dbReference type="GO" id="GO:0005759">
    <property type="term" value="C:mitochondrial matrix"/>
    <property type="evidence" value="ECO:0007669"/>
    <property type="project" value="UniProtKB-UniRule"/>
</dbReference>
<dbReference type="GO" id="GO:0005525">
    <property type="term" value="F:GTP binding"/>
    <property type="evidence" value="ECO:0007669"/>
    <property type="project" value="UniProtKB-UniRule"/>
</dbReference>
<dbReference type="GO" id="GO:0003924">
    <property type="term" value="F:GTPase activity"/>
    <property type="evidence" value="ECO:0007669"/>
    <property type="project" value="UniProtKB-UniRule"/>
</dbReference>
<dbReference type="GO" id="GO:0097177">
    <property type="term" value="F:mitochondrial ribosome binding"/>
    <property type="evidence" value="ECO:0007669"/>
    <property type="project" value="TreeGrafter"/>
</dbReference>
<dbReference type="GO" id="GO:0045727">
    <property type="term" value="P:positive regulation of translation"/>
    <property type="evidence" value="ECO:0007669"/>
    <property type="project" value="UniProtKB-UniRule"/>
</dbReference>
<dbReference type="GO" id="GO:0006412">
    <property type="term" value="P:translation"/>
    <property type="evidence" value="ECO:0007669"/>
    <property type="project" value="UniProtKB-KW"/>
</dbReference>
<dbReference type="CDD" id="cd03699">
    <property type="entry name" value="EF4_II"/>
    <property type="match status" value="1"/>
</dbReference>
<dbReference type="CDD" id="cd16260">
    <property type="entry name" value="EF4_III"/>
    <property type="match status" value="1"/>
</dbReference>
<dbReference type="CDD" id="cd01890">
    <property type="entry name" value="LepA"/>
    <property type="match status" value="1"/>
</dbReference>
<dbReference type="CDD" id="cd03709">
    <property type="entry name" value="lepA_C"/>
    <property type="match status" value="1"/>
</dbReference>
<dbReference type="FunFam" id="3.40.50.300:FF:000078">
    <property type="entry name" value="Elongation factor 4"/>
    <property type="match status" value="1"/>
</dbReference>
<dbReference type="FunFam" id="2.40.30.10:FF:000015">
    <property type="entry name" value="Translation factor GUF1, mitochondrial"/>
    <property type="match status" value="1"/>
</dbReference>
<dbReference type="FunFam" id="3.30.70.240:FF:000007">
    <property type="entry name" value="Translation factor GUF1, mitochondrial"/>
    <property type="match status" value="1"/>
</dbReference>
<dbReference type="FunFam" id="3.30.70.2570:FF:000001">
    <property type="entry name" value="Translation factor GUF1, mitochondrial"/>
    <property type="match status" value="1"/>
</dbReference>
<dbReference type="FunFam" id="3.30.70.870:FF:000004">
    <property type="entry name" value="Translation factor GUF1, mitochondrial"/>
    <property type="match status" value="1"/>
</dbReference>
<dbReference type="Gene3D" id="3.30.70.240">
    <property type="match status" value="1"/>
</dbReference>
<dbReference type="Gene3D" id="3.30.70.2570">
    <property type="entry name" value="Elongation factor 4, C-terminal domain"/>
    <property type="match status" value="1"/>
</dbReference>
<dbReference type="Gene3D" id="3.30.70.870">
    <property type="entry name" value="Elongation Factor G (Translational Gtpase), domain 3"/>
    <property type="match status" value="1"/>
</dbReference>
<dbReference type="Gene3D" id="3.40.50.300">
    <property type="entry name" value="P-loop containing nucleotide triphosphate hydrolases"/>
    <property type="match status" value="1"/>
</dbReference>
<dbReference type="Gene3D" id="2.40.30.10">
    <property type="entry name" value="Translation factors"/>
    <property type="match status" value="1"/>
</dbReference>
<dbReference type="HAMAP" id="MF_00071">
    <property type="entry name" value="LepA"/>
    <property type="match status" value="1"/>
</dbReference>
<dbReference type="InterPro" id="IPR006297">
    <property type="entry name" value="EF-4"/>
</dbReference>
<dbReference type="InterPro" id="IPR035647">
    <property type="entry name" value="EFG_III/V"/>
</dbReference>
<dbReference type="InterPro" id="IPR000640">
    <property type="entry name" value="EFG_V-like"/>
</dbReference>
<dbReference type="InterPro" id="IPR031157">
    <property type="entry name" value="G_TR_CS"/>
</dbReference>
<dbReference type="InterPro" id="IPR038363">
    <property type="entry name" value="LepA_C_sf"/>
</dbReference>
<dbReference type="InterPro" id="IPR013842">
    <property type="entry name" value="LepA_CTD"/>
</dbReference>
<dbReference type="InterPro" id="IPR035654">
    <property type="entry name" value="LepA_IV"/>
</dbReference>
<dbReference type="InterPro" id="IPR027417">
    <property type="entry name" value="P-loop_NTPase"/>
</dbReference>
<dbReference type="InterPro" id="IPR005225">
    <property type="entry name" value="Small_GTP-bd"/>
</dbReference>
<dbReference type="InterPro" id="IPR000795">
    <property type="entry name" value="T_Tr_GTP-bd_dom"/>
</dbReference>
<dbReference type="InterPro" id="IPR009000">
    <property type="entry name" value="Transl_B-barrel_sf"/>
</dbReference>
<dbReference type="NCBIfam" id="TIGR01393">
    <property type="entry name" value="lepA"/>
    <property type="match status" value="1"/>
</dbReference>
<dbReference type="NCBIfam" id="TIGR00231">
    <property type="entry name" value="small_GTP"/>
    <property type="match status" value="1"/>
</dbReference>
<dbReference type="PANTHER" id="PTHR43512:SF7">
    <property type="entry name" value="TRANSLATION FACTOR GUF1, MITOCHONDRIAL"/>
    <property type="match status" value="1"/>
</dbReference>
<dbReference type="PANTHER" id="PTHR43512">
    <property type="entry name" value="TRANSLATION FACTOR GUF1-RELATED"/>
    <property type="match status" value="1"/>
</dbReference>
<dbReference type="Pfam" id="PF00679">
    <property type="entry name" value="EFG_C"/>
    <property type="match status" value="1"/>
</dbReference>
<dbReference type="Pfam" id="PF00009">
    <property type="entry name" value="GTP_EFTU"/>
    <property type="match status" value="1"/>
</dbReference>
<dbReference type="Pfam" id="PF06421">
    <property type="entry name" value="LepA_C"/>
    <property type="match status" value="1"/>
</dbReference>
<dbReference type="PRINTS" id="PR00315">
    <property type="entry name" value="ELONGATNFCT"/>
</dbReference>
<dbReference type="SUPFAM" id="SSF54980">
    <property type="entry name" value="EF-G C-terminal domain-like"/>
    <property type="match status" value="2"/>
</dbReference>
<dbReference type="SUPFAM" id="SSF52540">
    <property type="entry name" value="P-loop containing nucleoside triphosphate hydrolases"/>
    <property type="match status" value="1"/>
</dbReference>
<dbReference type="SUPFAM" id="SSF50447">
    <property type="entry name" value="Translation proteins"/>
    <property type="match status" value="1"/>
</dbReference>
<dbReference type="PROSITE" id="PS00301">
    <property type="entry name" value="G_TR_1"/>
    <property type="match status" value="1"/>
</dbReference>
<dbReference type="PROSITE" id="PS51722">
    <property type="entry name" value="G_TR_2"/>
    <property type="match status" value="1"/>
</dbReference>
<comment type="function">
    <text evidence="1">Promotes mitochondrial protein synthesis. May act as a fidelity factor of the translation reaction, by catalyzing a one-codon backward translocation of tRNAs on improperly translocated ribosomes. Binds to mitochondrial ribosomes in a GTP-dependent manner.</text>
</comment>
<comment type="catalytic activity">
    <reaction evidence="1">
        <text>GTP + H2O = GDP + phosphate + H(+)</text>
        <dbReference type="Rhea" id="RHEA:19669"/>
        <dbReference type="ChEBI" id="CHEBI:15377"/>
        <dbReference type="ChEBI" id="CHEBI:15378"/>
        <dbReference type="ChEBI" id="CHEBI:37565"/>
        <dbReference type="ChEBI" id="CHEBI:43474"/>
        <dbReference type="ChEBI" id="CHEBI:58189"/>
    </reaction>
</comment>
<comment type="subcellular location">
    <subcellularLocation>
        <location evidence="1">Mitochondrion inner membrane</location>
        <topology evidence="1">Peripheral membrane protein</topology>
        <orientation evidence="1">Matrix side</orientation>
    </subcellularLocation>
</comment>
<comment type="similarity">
    <text evidence="2">Belongs to the TRAFAC class translation factor GTPase superfamily. Classic translation factor GTPase family. LepA subfamily.</text>
</comment>
<evidence type="ECO:0000255" key="1">
    <source>
        <dbReference type="HAMAP-Rule" id="MF_03137"/>
    </source>
</evidence>
<evidence type="ECO:0000305" key="2"/>